<organism>
    <name type="scientific">Naja naja</name>
    <name type="common">Indian cobra</name>
    <dbReference type="NCBI Taxonomy" id="35670"/>
    <lineage>
        <taxon>Eukaryota</taxon>
        <taxon>Metazoa</taxon>
        <taxon>Chordata</taxon>
        <taxon>Craniata</taxon>
        <taxon>Vertebrata</taxon>
        <taxon>Euteleostomi</taxon>
        <taxon>Lepidosauria</taxon>
        <taxon>Squamata</taxon>
        <taxon>Bifurcata</taxon>
        <taxon>Unidentata</taxon>
        <taxon>Episquamata</taxon>
        <taxon>Toxicofera</taxon>
        <taxon>Serpentes</taxon>
        <taxon>Colubroidea</taxon>
        <taxon>Elapidae</taxon>
        <taxon>Elapinae</taxon>
        <taxon>Naja</taxon>
    </lineage>
</organism>
<dbReference type="SMR" id="P86543"/>
<dbReference type="Proteomes" id="UP000694559">
    <property type="component" value="Unplaced"/>
</dbReference>
<dbReference type="GO" id="GO:0005576">
    <property type="term" value="C:extracellular region"/>
    <property type="evidence" value="ECO:0007669"/>
    <property type="project" value="UniProtKB-SubCell"/>
</dbReference>
<dbReference type="GO" id="GO:0005246">
    <property type="term" value="F:calcium channel regulator activity"/>
    <property type="evidence" value="ECO:0007669"/>
    <property type="project" value="UniProtKB-KW"/>
</dbReference>
<dbReference type="GO" id="GO:0090729">
    <property type="term" value="F:toxin activity"/>
    <property type="evidence" value="ECO:0007669"/>
    <property type="project" value="UniProtKB-KW"/>
</dbReference>
<evidence type="ECO:0000250" key="1"/>
<evidence type="ECO:0000250" key="2">
    <source>
        <dbReference type="UniProtKB" id="P84808"/>
    </source>
</evidence>
<evidence type="ECO:0000255" key="3"/>
<evidence type="ECO:0000256" key="4">
    <source>
        <dbReference type="SAM" id="MobiDB-lite"/>
    </source>
</evidence>
<evidence type="ECO:0000269" key="5">
    <source>
    </source>
</evidence>
<evidence type="ECO:0000303" key="6">
    <source>
    </source>
</evidence>
<evidence type="ECO:0000305" key="7"/>
<feature type="chain" id="PRO_0000394691" description="Cysteine-rich venom protein">
    <location>
        <begin position="1"/>
        <end position="33" status="greater than"/>
    </location>
</feature>
<feature type="region of interest" description="Disordered" evidence="4">
    <location>
        <begin position="1"/>
        <end position="33"/>
    </location>
</feature>
<feature type="compositionally biased region" description="Basic residues" evidence="4">
    <location>
        <begin position="24"/>
        <end position="33"/>
    </location>
</feature>
<feature type="sequence conflict" description="In Ref. 2; AA sequence." evidence="7" ref="2">
    <original>N</original>
    <variation>S</variation>
    <location>
        <position position="1"/>
    </location>
</feature>
<feature type="non-terminal residue" evidence="6">
    <location>
        <position position="33"/>
    </location>
</feature>
<name>CRVP1_NAJNA</name>
<sequence>NVDFNSESTRRKKKQKEIVDLHNSLRRRVSPTA</sequence>
<proteinExistence type="evidence at protein level"/>
<reference evidence="7" key="1">
    <citation type="journal article" date="2010" name="Biomed. Res.">
        <title>Molecular diversity in venom proteins of the Russell's viper (Daboia russellii russellii) and the Indian cobra (Naja naja) in Sri Lanka.</title>
        <authorList>
            <person name="Suzuki M."/>
            <person name="Itoh T."/>
            <person name="Bandaranayake B.M.A.I.K."/>
            <person name="Ranasinghe J.G."/>
            <person name="Athauda S.B."/>
            <person name="Moriyama A."/>
        </authorList>
    </citation>
    <scope>PROTEIN SEQUENCE</scope>
    <scope>SUBCELLULAR LOCATION</scope>
    <scope>TISSUE SPECIFICITY</scope>
    <source>
        <tissue evidence="5">Venom</tissue>
    </source>
</reference>
<reference key="2">
    <citation type="journal article" date="2009" name="J. Biochem.">
        <title>Structural divergence of cysteine-rich secretory proteins in snake venoms.</title>
        <authorList>
            <person name="Matsunaga Y."/>
            <person name="Yamazaki Y."/>
            <person name="Hyodo F."/>
            <person name="Sugiyama Y."/>
            <person name="Nozaki M."/>
            <person name="Morita T."/>
        </authorList>
    </citation>
    <scope>PROTEIN SEQUENCE OF 1-12</scope>
    <source>
        <tissue>Venom</tissue>
    </source>
</reference>
<accession>P86543</accession>
<keyword id="KW-0108">Calcium channel impairing toxin</keyword>
<keyword id="KW-0903">Direct protein sequencing</keyword>
<keyword id="KW-1015">Disulfide bond</keyword>
<keyword id="KW-0872">Ion channel impairing toxin</keyword>
<keyword id="KW-0528">Neurotoxin</keyword>
<keyword id="KW-1185">Reference proteome</keyword>
<keyword id="KW-0964">Secreted</keyword>
<keyword id="KW-0800">Toxin</keyword>
<keyword id="KW-1218">Voltage-gated calcium channel impairing toxin</keyword>
<protein>
    <recommendedName>
        <fullName>Cysteine-rich venom protein</fullName>
        <shortName>CRVP</shortName>
    </recommendedName>
    <alternativeName>
        <fullName evidence="6">Cysteine-rich secretory protein 1</fullName>
        <shortName evidence="6">CRISP1</shortName>
    </alternativeName>
    <alternativeName>
        <fullName evidence="6">Cysteine-rich secretory protein 2</fullName>
        <shortName evidence="6">CRISP2</shortName>
    </alternativeName>
    <alternativeName>
        <fullName>Najanajin</fullName>
    </alternativeName>
</protein>
<comment type="function">
    <text evidence="1">Blocks contraction of smooth muscle elicited by high potassium-induced depolarization, but does not block caffeine-stimulated contraction. May target voltage-gated calcium channels on smooth muscle (Cav) (By similarity).</text>
</comment>
<comment type="subcellular location">
    <subcellularLocation>
        <location evidence="5">Secreted</location>
    </subcellularLocation>
</comment>
<comment type="tissue specificity">
    <text evidence="5">Expressed by the venom gland.</text>
</comment>
<comment type="PTM">
    <text evidence="2">Contains 8 disulfide bonds.</text>
</comment>
<comment type="similarity">
    <text evidence="3">Belongs to the CRISP family.</text>
</comment>